<dbReference type="EMBL" id="AL445067">
    <property type="protein sequence ID" value="CAC12408.1"/>
    <property type="molecule type" value="Genomic_DNA"/>
</dbReference>
<dbReference type="SMR" id="Q9HIP7"/>
<dbReference type="STRING" id="273075.gene:9572508"/>
<dbReference type="PaxDb" id="273075-Ta1285"/>
<dbReference type="EnsemblBacteria" id="CAC12408">
    <property type="protein sequence ID" value="CAC12408"/>
    <property type="gene ID" value="CAC12408"/>
</dbReference>
<dbReference type="KEGG" id="tac:Ta1285"/>
<dbReference type="eggNOG" id="arCOG00470">
    <property type="taxonomic scope" value="Archaea"/>
</dbReference>
<dbReference type="HOGENOM" id="CLU_027255_1_1_2"/>
<dbReference type="InParanoid" id="Q9HIP7"/>
<dbReference type="OrthoDB" id="8658at2157"/>
<dbReference type="Proteomes" id="UP000001024">
    <property type="component" value="Chromosome"/>
</dbReference>
<dbReference type="GO" id="GO:0005524">
    <property type="term" value="F:ATP binding"/>
    <property type="evidence" value="ECO:0007669"/>
    <property type="project" value="UniProtKB-UniRule"/>
</dbReference>
<dbReference type="GO" id="GO:0016887">
    <property type="term" value="F:ATP hydrolysis activity"/>
    <property type="evidence" value="ECO:0007669"/>
    <property type="project" value="InterPro"/>
</dbReference>
<dbReference type="GO" id="GO:0003689">
    <property type="term" value="F:DNA clamp loader activity"/>
    <property type="evidence" value="ECO:0007669"/>
    <property type="project" value="UniProtKB-UniRule"/>
</dbReference>
<dbReference type="GO" id="GO:0006260">
    <property type="term" value="P:DNA replication"/>
    <property type="evidence" value="ECO:0007669"/>
    <property type="project" value="UniProtKB-UniRule"/>
</dbReference>
<dbReference type="CDD" id="cd00009">
    <property type="entry name" value="AAA"/>
    <property type="match status" value="1"/>
</dbReference>
<dbReference type="CDD" id="cd18140">
    <property type="entry name" value="HLD_clamp_RFC"/>
    <property type="match status" value="1"/>
</dbReference>
<dbReference type="Gene3D" id="1.10.8.60">
    <property type="match status" value="1"/>
</dbReference>
<dbReference type="Gene3D" id="3.40.50.300">
    <property type="entry name" value="P-loop containing nucleotide triphosphate hydrolases"/>
    <property type="match status" value="1"/>
</dbReference>
<dbReference type="HAMAP" id="MF_01508">
    <property type="entry name" value="RfcL"/>
    <property type="match status" value="1"/>
</dbReference>
<dbReference type="InterPro" id="IPR003593">
    <property type="entry name" value="AAA+_ATPase"/>
</dbReference>
<dbReference type="InterPro" id="IPR003959">
    <property type="entry name" value="ATPase_AAA_core"/>
</dbReference>
<dbReference type="InterPro" id="IPR027417">
    <property type="entry name" value="P-loop_NTPase"/>
</dbReference>
<dbReference type="InterPro" id="IPR023935">
    <property type="entry name" value="Rep_factor-C_lsu"/>
</dbReference>
<dbReference type="InterPro" id="IPR047854">
    <property type="entry name" value="RFC_lid"/>
</dbReference>
<dbReference type="NCBIfam" id="NF003229">
    <property type="entry name" value="PRK04195.1-5"/>
    <property type="match status" value="1"/>
</dbReference>
<dbReference type="PANTHER" id="PTHR23389">
    <property type="entry name" value="CHROMOSOME TRANSMISSION FIDELITY FACTOR 18"/>
    <property type="match status" value="1"/>
</dbReference>
<dbReference type="PANTHER" id="PTHR23389:SF6">
    <property type="entry name" value="REPLICATION FACTOR C SUBUNIT 1"/>
    <property type="match status" value="1"/>
</dbReference>
<dbReference type="Pfam" id="PF00004">
    <property type="entry name" value="AAA"/>
    <property type="match status" value="1"/>
</dbReference>
<dbReference type="SMART" id="SM00382">
    <property type="entry name" value="AAA"/>
    <property type="match status" value="1"/>
</dbReference>
<dbReference type="SUPFAM" id="SSF52540">
    <property type="entry name" value="P-loop containing nucleoside triphosphate hydrolases"/>
    <property type="match status" value="1"/>
</dbReference>
<feature type="chain" id="PRO_0000135968" description="Replication factor C large subunit">
    <location>
        <begin position="1"/>
        <end position="418"/>
    </location>
</feature>
<feature type="binding site" evidence="1">
    <location>
        <begin position="47"/>
        <end position="54"/>
    </location>
    <ligand>
        <name>ATP</name>
        <dbReference type="ChEBI" id="CHEBI:30616"/>
    </ligand>
</feature>
<accession>Q9HIP7</accession>
<gene>
    <name evidence="1" type="primary">rfcL</name>
    <name type="ordered locus">Ta1285</name>
</gene>
<comment type="function">
    <text evidence="1">Part of the RFC clamp loader complex which loads the PCNA sliding clamp onto DNA.</text>
</comment>
<comment type="subunit">
    <text evidence="1">Heteromultimer composed of small subunits (RfcS) and large subunits (RfcL).</text>
</comment>
<comment type="similarity">
    <text evidence="1">Belongs to the activator 1 small subunits family. RfcL subfamily.</text>
</comment>
<proteinExistence type="inferred from homology"/>
<organism>
    <name type="scientific">Thermoplasma acidophilum (strain ATCC 25905 / DSM 1728 / JCM 9062 / NBRC 15155 / AMRC-C165)</name>
    <dbReference type="NCBI Taxonomy" id="273075"/>
    <lineage>
        <taxon>Archaea</taxon>
        <taxon>Methanobacteriati</taxon>
        <taxon>Thermoplasmatota</taxon>
        <taxon>Thermoplasmata</taxon>
        <taxon>Thermoplasmatales</taxon>
        <taxon>Thermoplasmataceae</taxon>
        <taxon>Thermoplasma</taxon>
    </lineage>
</organism>
<keyword id="KW-0067">ATP-binding</keyword>
<keyword id="KW-0235">DNA replication</keyword>
<keyword id="KW-0547">Nucleotide-binding</keyword>
<keyword id="KW-1185">Reference proteome</keyword>
<evidence type="ECO:0000255" key="1">
    <source>
        <dbReference type="HAMAP-Rule" id="MF_01508"/>
    </source>
</evidence>
<protein>
    <recommendedName>
        <fullName evidence="1">Replication factor C large subunit</fullName>
        <shortName evidence="1">RFC large subunit</shortName>
    </recommendedName>
    <alternativeName>
        <fullName evidence="1">Clamp loader large subunit</fullName>
    </alternativeName>
</protein>
<name>RFCL_THEAC</name>
<reference key="1">
    <citation type="journal article" date="2000" name="Nature">
        <title>The genome sequence of the thermoacidophilic scavenger Thermoplasma acidophilum.</title>
        <authorList>
            <person name="Ruepp A."/>
            <person name="Graml W."/>
            <person name="Santos-Martinez M.-L."/>
            <person name="Koretke K.K."/>
            <person name="Volker C."/>
            <person name="Mewes H.-W."/>
            <person name="Frishman D."/>
            <person name="Stocker S."/>
            <person name="Lupas A.N."/>
            <person name="Baumeister W."/>
        </authorList>
    </citation>
    <scope>NUCLEOTIDE SEQUENCE [LARGE SCALE GENOMIC DNA]</scope>
    <source>
        <strain>ATCC 25905 / DSM 1728 / JCM 9062 / NBRC 15155 / AMRC-C165</strain>
    </source>
</reference>
<sequence>MMSWADKYRPKNIDDVILNSEIRKQITEWIESWKEGIPKKRSLILYGSQGTGKTTTAYAIAGTFGVPVVEMNASDQRNRDSMRGTALMASLYGDLFVESAKRPSKVILIDEADNMFERGGDTGGIYELSKIIKNSANPIVITMNDIFEFRKKNYASDVISASLTIEMKQYGRKLDKNYNEFRRNIKARLIFILKNEGYTLPDQVVDRIIDRNMPDIRSMINDLEASAVSGTNISDQSSRDVPEIVYYMVDKAFKRNYDDTLRSIYGSDIDDSYYVSWIDENLPLKTVDLQDLVSAYEVISYADHILWAMERRRHYELMAFPMEIAGGVAYYIENMKHEYVKYQSPSYISQMSKTKEKRHAMMSLALKIGLLIHMGAQRTSEDLWFYSLLYQHNEKLRTFFEEKLNLTQGEENVLTRSE</sequence>